<dbReference type="EC" id="3.4.23.43" evidence="1"/>
<dbReference type="EC" id="2.1.1.-" evidence="1"/>
<dbReference type="EMBL" id="X74276">
    <property type="protein sequence ID" value="CAA52334.1"/>
    <property type="molecule type" value="Genomic_DNA"/>
</dbReference>
<dbReference type="PIR" id="B36961">
    <property type="entry name" value="B36961"/>
</dbReference>
<dbReference type="MEROPS" id="A24.001"/>
<dbReference type="GO" id="GO:0005886">
    <property type="term" value="C:plasma membrane"/>
    <property type="evidence" value="ECO:0007669"/>
    <property type="project" value="UniProtKB-SubCell"/>
</dbReference>
<dbReference type="GO" id="GO:0004190">
    <property type="term" value="F:aspartic-type endopeptidase activity"/>
    <property type="evidence" value="ECO:0007669"/>
    <property type="project" value="UniProtKB-EC"/>
</dbReference>
<dbReference type="GO" id="GO:0046872">
    <property type="term" value="F:metal ion binding"/>
    <property type="evidence" value="ECO:0007669"/>
    <property type="project" value="UniProtKB-KW"/>
</dbReference>
<dbReference type="GO" id="GO:0008168">
    <property type="term" value="F:methyltransferase activity"/>
    <property type="evidence" value="ECO:0007669"/>
    <property type="project" value="UniProtKB-KW"/>
</dbReference>
<dbReference type="GO" id="GO:0032259">
    <property type="term" value="P:methylation"/>
    <property type="evidence" value="ECO:0007669"/>
    <property type="project" value="UniProtKB-KW"/>
</dbReference>
<dbReference type="GO" id="GO:0006465">
    <property type="term" value="P:signal peptide processing"/>
    <property type="evidence" value="ECO:0007669"/>
    <property type="project" value="TreeGrafter"/>
</dbReference>
<dbReference type="FunFam" id="1.20.120.1220:FF:000001">
    <property type="entry name" value="Type 4 prepilin-like proteins leader peptide-processing enzyme"/>
    <property type="match status" value="1"/>
</dbReference>
<dbReference type="Gene3D" id="1.20.120.1220">
    <property type="match status" value="1"/>
</dbReference>
<dbReference type="InterPro" id="IPR014032">
    <property type="entry name" value="Peptidase_A24A_bac"/>
</dbReference>
<dbReference type="InterPro" id="IPR000045">
    <property type="entry name" value="Prepilin_IV_endopep_pep"/>
</dbReference>
<dbReference type="InterPro" id="IPR010627">
    <property type="entry name" value="Prepilin_pept_A24_N"/>
</dbReference>
<dbReference type="InterPro" id="IPR050882">
    <property type="entry name" value="Prepilin_peptidase/N-MTase"/>
</dbReference>
<dbReference type="PANTHER" id="PTHR30487:SF0">
    <property type="entry name" value="PREPILIN LEADER PEPTIDASE_N-METHYLTRANSFERASE-RELATED"/>
    <property type="match status" value="1"/>
</dbReference>
<dbReference type="PANTHER" id="PTHR30487">
    <property type="entry name" value="TYPE 4 PREPILIN-LIKE PROTEINS LEADER PEPTIDE-PROCESSING ENZYME"/>
    <property type="match status" value="1"/>
</dbReference>
<dbReference type="Pfam" id="PF06750">
    <property type="entry name" value="A24_N_bact"/>
    <property type="match status" value="1"/>
</dbReference>
<dbReference type="Pfam" id="PF01478">
    <property type="entry name" value="Peptidase_A24"/>
    <property type="match status" value="1"/>
</dbReference>
<dbReference type="PRINTS" id="PR00864">
    <property type="entry name" value="PREPILNPTASE"/>
</dbReference>
<keyword id="KW-0997">Cell inner membrane</keyword>
<keyword id="KW-1003">Cell membrane</keyword>
<keyword id="KW-0378">Hydrolase</keyword>
<keyword id="KW-0472">Membrane</keyword>
<keyword id="KW-0479">Metal-binding</keyword>
<keyword id="KW-0489">Methyltransferase</keyword>
<keyword id="KW-0511">Multifunctional enzyme</keyword>
<keyword id="KW-0645">Protease</keyword>
<keyword id="KW-0949">S-adenosyl-L-methionine</keyword>
<keyword id="KW-0808">Transferase</keyword>
<keyword id="KW-0812">Transmembrane</keyword>
<keyword id="KW-1133">Transmembrane helix</keyword>
<keyword id="KW-0862">Zinc</keyword>
<gene>
    <name type="primary">pilD</name>
    <name type="synonym">xcpA</name>
</gene>
<feature type="chain" id="PRO_0000192626" description="Prepilin leader peptidase/N-methyltransferase">
    <location>
        <begin position="1"/>
        <end position="288"/>
    </location>
</feature>
<feature type="transmembrane region" description="Helical" evidence="2">
    <location>
        <begin position="14"/>
        <end position="34"/>
    </location>
</feature>
<feature type="transmembrane region" description="Helical" evidence="2">
    <location>
        <begin position="103"/>
        <end position="123"/>
    </location>
</feature>
<feature type="transmembrane region" description="Helical" evidence="2">
    <location>
        <begin position="127"/>
        <end position="147"/>
    </location>
</feature>
<feature type="transmembrane region" description="Helical" evidence="2">
    <location>
        <begin position="158"/>
        <end position="178"/>
    </location>
</feature>
<feature type="transmembrane region" description="Helical" evidence="2">
    <location>
        <begin position="182"/>
        <end position="202"/>
    </location>
</feature>
<feature type="transmembrane region" description="Helical" evidence="2">
    <location>
        <begin position="227"/>
        <end position="247"/>
    </location>
</feature>
<feature type="transmembrane region" description="Helical" evidence="2">
    <location>
        <begin position="254"/>
        <end position="274"/>
    </location>
</feature>
<feature type="binding site" evidence="1">
    <location>
        <position position="71"/>
    </location>
    <ligand>
        <name>Zn(2+)</name>
        <dbReference type="ChEBI" id="CHEBI:29105"/>
    </ligand>
</feature>
<feature type="binding site" evidence="1">
    <location>
        <position position="74"/>
    </location>
    <ligand>
        <name>Zn(2+)</name>
        <dbReference type="ChEBI" id="CHEBI:29105"/>
    </ligand>
</feature>
<feature type="binding site" evidence="1">
    <location>
        <position position="96"/>
    </location>
    <ligand>
        <name>Zn(2+)</name>
        <dbReference type="ChEBI" id="CHEBI:29105"/>
    </ligand>
</feature>
<feature type="binding site" evidence="1">
    <location>
        <position position="99"/>
    </location>
    <ligand>
        <name>Zn(2+)</name>
        <dbReference type="ChEBI" id="CHEBI:29105"/>
    </ligand>
</feature>
<proteinExistence type="inferred from homology"/>
<accession>P36642</accession>
<comment type="function">
    <text evidence="1">Plays an essential role in type IV pili and type II pseudopili formation by proteolytically removing the leader sequence from substrate proteins and subsequently monomethylating the alpha-amino group of the newly exposed N-terminal phenylalanine.</text>
</comment>
<comment type="catalytic activity">
    <reaction evidence="1">
        <text>Typically cleaves a -Gly-|-Phe- bond to release an N-terminal, basic peptide of 5-8 residues from type IV prepilin, and then N-methylates the new N-terminal amino group, the methyl donor being S-adenosyl-L-methionine.</text>
        <dbReference type="EC" id="3.4.23.43"/>
    </reaction>
</comment>
<comment type="cofactor">
    <cofactor evidence="1">
        <name>Zn(2+)</name>
        <dbReference type="ChEBI" id="CHEBI:29105"/>
    </cofactor>
    <text evidence="1">Zinc is required for the N-terminal methylation of the mature pilin, but not for signal peptide cleavage.</text>
</comment>
<comment type="subcellular location">
    <subcellularLocation>
        <location evidence="1">Cell inner membrane</location>
        <topology evidence="1">Multi-pass membrane protein</topology>
    </subcellularLocation>
</comment>
<comment type="similarity">
    <text evidence="3">Belongs to the peptidase A24 family.</text>
</comment>
<protein>
    <recommendedName>
        <fullName>Prepilin leader peptidase/N-methyltransferase</fullName>
    </recommendedName>
    <alternativeName>
        <fullName>Protein PilD</fullName>
    </alternativeName>
    <alternativeName>
        <fullName>Protein secretion protein XCPA</fullName>
    </alternativeName>
    <domain>
        <recommendedName>
            <fullName>Leader peptidase</fullName>
            <ecNumber evidence="1">3.4.23.43</ecNumber>
        </recommendedName>
        <alternativeName>
            <fullName>Prepilin peptidase</fullName>
        </alternativeName>
    </domain>
    <domain>
        <recommendedName>
            <fullName>N-methyltransferase</fullName>
            <ecNumber evidence="1">2.1.1.-</ecNumber>
        </recommendedName>
    </domain>
</protein>
<sequence length="288" mass="31972">MTLWTFLAMEPAYFITLATVLGLLVGSFLNVVVYRLPIMLERQWQREAHEVLGLPVTEHERFDLCLPASQCTQCGHRIRAWENLPVLSYLALRGRCSACKQRISVRYPLVEVGCALLSMVVAWRYGASVEALVLLPLTWSLLALSLIDHDQQLLPDAIVLPGLWLGLIVNYFGVWVPLPDAVCGAVVGYLSLWTVYWLFKLVTGKEGMGYGDFKLLALLGAWGGWQVLPLTLLLSSVLGALVGVYLLRVRNDSMGTAMPFGPYLAIAGWIAVLWGDEIYASNMQLLGF</sequence>
<organism>
    <name type="scientific">Pseudomonas putida</name>
    <name type="common">Arthrobacter siderocapsulatus</name>
    <dbReference type="NCBI Taxonomy" id="303"/>
    <lineage>
        <taxon>Bacteria</taxon>
        <taxon>Pseudomonadati</taxon>
        <taxon>Pseudomonadota</taxon>
        <taxon>Gammaproteobacteria</taxon>
        <taxon>Pseudomonadales</taxon>
        <taxon>Pseudomonadaceae</taxon>
        <taxon>Pseudomonas</taxon>
    </lineage>
</organism>
<reference key="1">
    <citation type="journal article" date="1994" name="J. Bacteriol.">
        <title>Characterization of type IV pilus genes in plant growth-promoting Pseudomonas putida WCS358.</title>
        <authorList>
            <person name="de Groot A."/>
            <person name="Heijnen I."/>
            <person name="de Cock H."/>
            <person name="Filloux A."/>
            <person name="Tommassen J."/>
        </authorList>
    </citation>
    <scope>NUCLEOTIDE SEQUENCE [GENOMIC DNA]</scope>
    <source>
        <strain>WCS358</strain>
    </source>
</reference>
<name>LEP4_PSEPU</name>
<evidence type="ECO:0000250" key="1">
    <source>
        <dbReference type="UniProtKB" id="P22610"/>
    </source>
</evidence>
<evidence type="ECO:0000255" key="2"/>
<evidence type="ECO:0000305" key="3"/>